<accession>Q5UQ59</accession>
<organism>
    <name type="scientific">Acanthamoeba polyphaga mimivirus</name>
    <name type="common">APMV</name>
    <dbReference type="NCBI Taxonomy" id="212035"/>
    <lineage>
        <taxon>Viruses</taxon>
        <taxon>Varidnaviria</taxon>
        <taxon>Bamfordvirae</taxon>
        <taxon>Nucleocytoviricota</taxon>
        <taxon>Megaviricetes</taxon>
        <taxon>Imitervirales</taxon>
        <taxon>Mimiviridae</taxon>
        <taxon>Megamimivirinae</taxon>
        <taxon>Mimivirus</taxon>
        <taxon>Mimivirus bradfordmassiliense</taxon>
    </lineage>
</organism>
<sequence length="600" mass="68994">MQDNLIYLANCFLNEAIKTTLQNLNKVNIIDTPELYSFVKGINTDYQFNKSTKLANDCNLDKEKIVNELITQLKSNSFFENISSVELEQNKSVKINGKKTNTVIKQIMITLNISKLYLSNRINLLYKRILSGSSIYVPNTITKKIIVDYSSPNIAKEMHIGHLRSTIIGESICRVLEMCGHDVYRINHVGDWGTQFGMLIAYIKNNQIESYTISELMNIYKESRKLFESSIDFKNQSRLETVSLQNGNIESITIWQKIHKISMNSFHEIYSLLGINNLITKGESFYQDQMTELVNSLTSDNKITVENDMKLMFVEGISKPFILQKSDGGFTYDTSDLTALKYRLFIEKADHIIYVVDSSQQEHFSQMFQIAEKLDWIKNQQLQHIGFGLVLGSDGSKLKTRSGETIKLQDVIDNVVSHASNITRELIKQKNLDWNDDDILTISKKIAINCIKYSDLNNPRLNNYKFDINKMLNSKGNTAVYLMYGLARCKSILRKVPNNTVLNGDIIIENENSRNLLLHVLKYVEVIDQTVETMCPHYLCIYLYDLIGSLTKFYTTNRCLEYDNDNLIGYNANNLRIVNMVKIIISKIFELIGLEEIEQL</sequence>
<name>SYR_MIMIV</name>
<evidence type="ECO:0000250" key="1">
    <source>
        <dbReference type="UniProtKB" id="P54136"/>
    </source>
</evidence>
<evidence type="ECO:0000305" key="2"/>
<gene>
    <name type="primary">RARS</name>
    <name type="ordered locus">MIMI_R663</name>
</gene>
<feature type="chain" id="PRO_0000151665" description="Arginine--tRNA ligase">
    <location>
        <begin position="1"/>
        <end position="600"/>
    </location>
</feature>
<feature type="short sequence motif" description="'HIGH' region">
    <location>
        <begin position="152"/>
        <end position="162"/>
    </location>
</feature>
<feature type="binding site" evidence="1">
    <location>
        <begin position="151"/>
        <end position="153"/>
    </location>
    <ligand>
        <name>L-arginine</name>
        <dbReference type="ChEBI" id="CHEBI:32682"/>
    </ligand>
</feature>
<feature type="binding site" evidence="1">
    <location>
        <position position="162"/>
    </location>
    <ligand>
        <name>L-arginine</name>
        <dbReference type="ChEBI" id="CHEBI:32682"/>
    </ligand>
</feature>
<feature type="binding site" evidence="1">
    <location>
        <position position="332"/>
    </location>
    <ligand>
        <name>L-arginine</name>
        <dbReference type="ChEBI" id="CHEBI:32682"/>
    </ligand>
</feature>
<feature type="binding site" evidence="1">
    <location>
        <position position="336"/>
    </location>
    <ligand>
        <name>L-arginine</name>
        <dbReference type="ChEBI" id="CHEBI:32682"/>
    </ligand>
</feature>
<feature type="binding site" evidence="1">
    <location>
        <position position="360"/>
    </location>
    <ligand>
        <name>L-arginine</name>
        <dbReference type="ChEBI" id="CHEBI:32682"/>
    </ligand>
</feature>
<keyword id="KW-0030">Aminoacyl-tRNA synthetase</keyword>
<keyword id="KW-0067">ATP-binding</keyword>
<keyword id="KW-0436">Ligase</keyword>
<keyword id="KW-0547">Nucleotide-binding</keyword>
<keyword id="KW-0648">Protein biosynthesis</keyword>
<keyword id="KW-1185">Reference proteome</keyword>
<protein>
    <recommendedName>
        <fullName>Arginine--tRNA ligase</fullName>
        <ecNumber>6.1.1.19</ecNumber>
    </recommendedName>
    <alternativeName>
        <fullName>Arginyl-tRNA synthetase</fullName>
        <shortName>ArgRS</shortName>
    </alternativeName>
</protein>
<comment type="catalytic activity">
    <reaction>
        <text>tRNA(Arg) + L-arginine + ATP = L-arginyl-tRNA(Arg) + AMP + diphosphate</text>
        <dbReference type="Rhea" id="RHEA:20301"/>
        <dbReference type="Rhea" id="RHEA-COMP:9658"/>
        <dbReference type="Rhea" id="RHEA-COMP:9673"/>
        <dbReference type="ChEBI" id="CHEBI:30616"/>
        <dbReference type="ChEBI" id="CHEBI:32682"/>
        <dbReference type="ChEBI" id="CHEBI:33019"/>
        <dbReference type="ChEBI" id="CHEBI:78442"/>
        <dbReference type="ChEBI" id="CHEBI:78513"/>
        <dbReference type="ChEBI" id="CHEBI:456215"/>
        <dbReference type="EC" id="6.1.1.19"/>
    </reaction>
</comment>
<comment type="similarity">
    <text evidence="2">Belongs to the class-I aminoacyl-tRNA synthetase family.</text>
</comment>
<reference key="1">
    <citation type="journal article" date="2004" name="Science">
        <title>The 1.2-megabase genome sequence of Mimivirus.</title>
        <authorList>
            <person name="Raoult D."/>
            <person name="Audic S."/>
            <person name="Robert C."/>
            <person name="Abergel C."/>
            <person name="Renesto P."/>
            <person name="Ogata H."/>
            <person name="La Scola B."/>
            <person name="Susan M."/>
            <person name="Claverie J.-M."/>
        </authorList>
    </citation>
    <scope>NUCLEOTIDE SEQUENCE [LARGE SCALE GENOMIC DNA]</scope>
    <source>
        <strain>Rowbotham-Bradford</strain>
    </source>
</reference>
<organismHost>
    <name type="scientific">Acanthamoeba polyphaga</name>
    <name type="common">Amoeba</name>
    <dbReference type="NCBI Taxonomy" id="5757"/>
</organismHost>
<proteinExistence type="inferred from homology"/>
<dbReference type="EC" id="6.1.1.19"/>
<dbReference type="EMBL" id="AY653733">
    <property type="protein sequence ID" value="AAV50924.1"/>
    <property type="molecule type" value="Genomic_DNA"/>
</dbReference>
<dbReference type="SMR" id="Q5UQ59"/>
<dbReference type="KEGG" id="vg:9925309"/>
<dbReference type="OrthoDB" id="29787at10239"/>
<dbReference type="Proteomes" id="UP000001134">
    <property type="component" value="Genome"/>
</dbReference>
<dbReference type="GO" id="GO:0004814">
    <property type="term" value="F:arginine-tRNA ligase activity"/>
    <property type="evidence" value="ECO:0007669"/>
    <property type="project" value="UniProtKB-EC"/>
</dbReference>
<dbReference type="GO" id="GO:0005524">
    <property type="term" value="F:ATP binding"/>
    <property type="evidence" value="ECO:0007669"/>
    <property type="project" value="UniProtKB-KW"/>
</dbReference>
<dbReference type="CDD" id="cd00671">
    <property type="entry name" value="ArgRS_core"/>
    <property type="match status" value="1"/>
</dbReference>
<dbReference type="FunFam" id="3.40.50.620:FF:000116">
    <property type="entry name" value="Arginine--tRNA ligase"/>
    <property type="match status" value="1"/>
</dbReference>
<dbReference type="Gene3D" id="3.40.50.620">
    <property type="entry name" value="HUPs"/>
    <property type="match status" value="1"/>
</dbReference>
<dbReference type="Gene3D" id="1.10.730.10">
    <property type="entry name" value="Isoleucyl-tRNA Synthetase, Domain 1"/>
    <property type="match status" value="1"/>
</dbReference>
<dbReference type="InterPro" id="IPR001412">
    <property type="entry name" value="aa-tRNA-synth_I_CS"/>
</dbReference>
<dbReference type="InterPro" id="IPR001278">
    <property type="entry name" value="Arg-tRNA-ligase"/>
</dbReference>
<dbReference type="InterPro" id="IPR035684">
    <property type="entry name" value="ArgRS_core"/>
</dbReference>
<dbReference type="InterPro" id="IPR008909">
    <property type="entry name" value="DALR_anticod-bd"/>
</dbReference>
<dbReference type="InterPro" id="IPR014729">
    <property type="entry name" value="Rossmann-like_a/b/a_fold"/>
</dbReference>
<dbReference type="InterPro" id="IPR009080">
    <property type="entry name" value="tRNAsynth_Ia_anticodon-bd"/>
</dbReference>
<dbReference type="NCBIfam" id="TIGR00456">
    <property type="entry name" value="argS"/>
    <property type="match status" value="1"/>
</dbReference>
<dbReference type="PANTHER" id="PTHR11956:SF5">
    <property type="entry name" value="ARGININE--TRNA LIGASE, CYTOPLASMIC"/>
    <property type="match status" value="1"/>
</dbReference>
<dbReference type="PANTHER" id="PTHR11956">
    <property type="entry name" value="ARGINYL-TRNA SYNTHETASE"/>
    <property type="match status" value="1"/>
</dbReference>
<dbReference type="Pfam" id="PF05746">
    <property type="entry name" value="DALR_1"/>
    <property type="match status" value="1"/>
</dbReference>
<dbReference type="Pfam" id="PF00750">
    <property type="entry name" value="tRNA-synt_1d"/>
    <property type="match status" value="1"/>
</dbReference>
<dbReference type="PRINTS" id="PR01038">
    <property type="entry name" value="TRNASYNTHARG"/>
</dbReference>
<dbReference type="SMART" id="SM00836">
    <property type="entry name" value="DALR_1"/>
    <property type="match status" value="1"/>
</dbReference>
<dbReference type="SUPFAM" id="SSF47323">
    <property type="entry name" value="Anticodon-binding domain of a subclass of class I aminoacyl-tRNA synthetases"/>
    <property type="match status" value="1"/>
</dbReference>
<dbReference type="SUPFAM" id="SSF52374">
    <property type="entry name" value="Nucleotidylyl transferase"/>
    <property type="match status" value="1"/>
</dbReference>
<dbReference type="PROSITE" id="PS00178">
    <property type="entry name" value="AA_TRNA_LIGASE_I"/>
    <property type="match status" value="1"/>
</dbReference>